<keyword id="KW-0067">ATP-binding</keyword>
<keyword id="KW-0227">DNA damage</keyword>
<keyword id="KW-0234">DNA repair</keyword>
<keyword id="KW-0238">DNA-binding</keyword>
<keyword id="KW-0547">Nucleotide-binding</keyword>
<comment type="function">
    <text evidence="1">This protein is involved in the repair of mismatches in DNA. It is possible that it carries out the mismatch recognition step. This protein has a weak ATPase activity (By similarity).</text>
</comment>
<comment type="similarity">
    <text evidence="2">Belongs to the DNA mismatch repair MutS family.</text>
</comment>
<dbReference type="EMBL" id="U16152">
    <property type="protein sequence ID" value="AAC43392.1"/>
    <property type="molecule type" value="Genomic_DNA"/>
</dbReference>
<dbReference type="SMR" id="P47763"/>
<dbReference type="STRING" id="1443113.LC20_04385"/>
<dbReference type="eggNOG" id="COG0249">
    <property type="taxonomic scope" value="Bacteria"/>
</dbReference>
<dbReference type="GO" id="GO:0005524">
    <property type="term" value="F:ATP binding"/>
    <property type="evidence" value="ECO:0007669"/>
    <property type="project" value="UniProtKB-KW"/>
</dbReference>
<dbReference type="GO" id="GO:0003677">
    <property type="term" value="F:DNA binding"/>
    <property type="evidence" value="ECO:0007669"/>
    <property type="project" value="UniProtKB-KW"/>
</dbReference>
<dbReference type="GO" id="GO:0006281">
    <property type="term" value="P:DNA repair"/>
    <property type="evidence" value="ECO:0007669"/>
    <property type="project" value="UniProtKB-KW"/>
</dbReference>
<dbReference type="Gene3D" id="6.10.140.430">
    <property type="match status" value="1"/>
</dbReference>
<protein>
    <recommendedName>
        <fullName>DNA mismatch repair protein MutS</fullName>
    </recommendedName>
</protein>
<gene>
    <name type="primary">mutS</name>
</gene>
<proteinExistence type="inferred from homology"/>
<name>MUTS_YEREN</name>
<organism>
    <name type="scientific">Yersinia enterocolitica</name>
    <dbReference type="NCBI Taxonomy" id="630"/>
    <lineage>
        <taxon>Bacteria</taxon>
        <taxon>Pseudomonadati</taxon>
        <taxon>Pseudomonadota</taxon>
        <taxon>Gammaproteobacteria</taxon>
        <taxon>Enterobacterales</taxon>
        <taxon>Yersiniaceae</taxon>
        <taxon>Yersinia</taxon>
    </lineage>
</organism>
<feature type="chain" id="PRO_0000115173" description="DNA mismatch repair protein MutS">
    <location>
        <begin position="1" status="less than"/>
        <end position="38"/>
    </location>
</feature>
<feature type="non-terminal residue">
    <location>
        <position position="1"/>
    </location>
</feature>
<accession>P47763</accession>
<sequence>TLLNEEVSPAVEALESLDPDSLSPRQALEWIYRLKNMV</sequence>
<evidence type="ECO:0000250" key="1"/>
<evidence type="ECO:0000305" key="2"/>
<reference key="1">
    <citation type="journal article" date="1995" name="Infect. Immun.">
        <title>The rpoS gene from Yersinia enterocolitica and its influence on expression of virulence factors.</title>
        <authorList>
            <person name="Iriarte M."/>
            <person name="Stainier I."/>
            <person name="Cornelis G.R."/>
        </authorList>
    </citation>
    <scope>NUCLEOTIDE SEQUENCE [GENOMIC DNA]</scope>
    <source>
        <strain>W1024 / Serotype O:9</strain>
    </source>
</reference>